<gene>
    <name evidence="1" type="primary">rpmB</name>
    <name type="ordered locus">MYPE4030</name>
</gene>
<protein>
    <recommendedName>
        <fullName evidence="1">Large ribosomal subunit protein bL28</fullName>
    </recommendedName>
    <alternativeName>
        <fullName evidence="3">50S ribosomal protein L28</fullName>
    </alternativeName>
</protein>
<evidence type="ECO:0000255" key="1">
    <source>
        <dbReference type="HAMAP-Rule" id="MF_00373"/>
    </source>
</evidence>
<evidence type="ECO:0000256" key="2">
    <source>
        <dbReference type="SAM" id="MobiDB-lite"/>
    </source>
</evidence>
<evidence type="ECO:0000305" key="3"/>
<reference key="1">
    <citation type="journal article" date="2002" name="Nucleic Acids Res.">
        <title>The complete genomic sequence of Mycoplasma penetrans, an intracellular bacterial pathogen in humans.</title>
        <authorList>
            <person name="Sasaki Y."/>
            <person name="Ishikawa J."/>
            <person name="Yamashita A."/>
            <person name="Oshima K."/>
            <person name="Kenri T."/>
            <person name="Furuya K."/>
            <person name="Yoshino C."/>
            <person name="Horino A."/>
            <person name="Shiba T."/>
            <person name="Sasaki T."/>
            <person name="Hattori M."/>
        </authorList>
    </citation>
    <scope>NUCLEOTIDE SEQUENCE [LARGE SCALE GENOMIC DNA]</scope>
    <source>
        <strain>HF-2</strain>
    </source>
</reference>
<organism>
    <name type="scientific">Malacoplasma penetrans (strain HF-2)</name>
    <name type="common">Mycoplasma penetrans</name>
    <dbReference type="NCBI Taxonomy" id="272633"/>
    <lineage>
        <taxon>Bacteria</taxon>
        <taxon>Bacillati</taxon>
        <taxon>Mycoplasmatota</taxon>
        <taxon>Mycoplasmoidales</taxon>
        <taxon>Mycoplasmoidaceae</taxon>
        <taxon>Malacoplasma</taxon>
    </lineage>
</organism>
<feature type="chain" id="PRO_0000178509" description="Large ribosomal subunit protein bL28">
    <location>
        <begin position="1"/>
        <end position="82"/>
    </location>
</feature>
<feature type="region of interest" description="Disordered" evidence="2">
    <location>
        <begin position="1"/>
        <end position="25"/>
    </location>
</feature>
<dbReference type="EMBL" id="BA000026">
    <property type="protein sequence ID" value="BAC44193.1"/>
    <property type="molecule type" value="Genomic_DNA"/>
</dbReference>
<dbReference type="RefSeq" id="WP_011077229.1">
    <property type="nucleotide sequence ID" value="NC_004432.1"/>
</dbReference>
<dbReference type="SMR" id="Q8EW04"/>
<dbReference type="FunCoup" id="Q8EW04">
    <property type="interactions" value="101"/>
</dbReference>
<dbReference type="STRING" id="272633.gene:10731519"/>
<dbReference type="KEGG" id="mpe:MYPE4030"/>
<dbReference type="eggNOG" id="COG0227">
    <property type="taxonomic scope" value="Bacteria"/>
</dbReference>
<dbReference type="HOGENOM" id="CLU_064548_7_2_14"/>
<dbReference type="InParanoid" id="Q8EW04"/>
<dbReference type="Proteomes" id="UP000002522">
    <property type="component" value="Chromosome"/>
</dbReference>
<dbReference type="GO" id="GO:1990904">
    <property type="term" value="C:ribonucleoprotein complex"/>
    <property type="evidence" value="ECO:0007669"/>
    <property type="project" value="UniProtKB-KW"/>
</dbReference>
<dbReference type="GO" id="GO:0005840">
    <property type="term" value="C:ribosome"/>
    <property type="evidence" value="ECO:0007669"/>
    <property type="project" value="UniProtKB-KW"/>
</dbReference>
<dbReference type="GO" id="GO:0003735">
    <property type="term" value="F:structural constituent of ribosome"/>
    <property type="evidence" value="ECO:0007669"/>
    <property type="project" value="InterPro"/>
</dbReference>
<dbReference type="GO" id="GO:0006412">
    <property type="term" value="P:translation"/>
    <property type="evidence" value="ECO:0007669"/>
    <property type="project" value="UniProtKB-UniRule"/>
</dbReference>
<dbReference type="Gene3D" id="2.30.170.40">
    <property type="entry name" value="Ribosomal protein L28/L24"/>
    <property type="match status" value="1"/>
</dbReference>
<dbReference type="HAMAP" id="MF_00373">
    <property type="entry name" value="Ribosomal_bL28"/>
    <property type="match status" value="1"/>
</dbReference>
<dbReference type="InterPro" id="IPR050096">
    <property type="entry name" value="Bacterial_rp_bL28"/>
</dbReference>
<dbReference type="InterPro" id="IPR026569">
    <property type="entry name" value="Ribosomal_bL28"/>
</dbReference>
<dbReference type="InterPro" id="IPR034704">
    <property type="entry name" value="Ribosomal_bL28/bL31-like_sf"/>
</dbReference>
<dbReference type="InterPro" id="IPR001383">
    <property type="entry name" value="Ribosomal_bL28_bact-type"/>
</dbReference>
<dbReference type="InterPro" id="IPR037147">
    <property type="entry name" value="Ribosomal_bL28_sf"/>
</dbReference>
<dbReference type="NCBIfam" id="TIGR00009">
    <property type="entry name" value="L28"/>
    <property type="match status" value="1"/>
</dbReference>
<dbReference type="PANTHER" id="PTHR39080">
    <property type="entry name" value="50S RIBOSOMAL PROTEIN L28"/>
    <property type="match status" value="1"/>
</dbReference>
<dbReference type="PANTHER" id="PTHR39080:SF1">
    <property type="entry name" value="LARGE RIBOSOMAL SUBUNIT PROTEIN BL28A"/>
    <property type="match status" value="1"/>
</dbReference>
<dbReference type="Pfam" id="PF00830">
    <property type="entry name" value="Ribosomal_L28"/>
    <property type="match status" value="1"/>
</dbReference>
<dbReference type="SUPFAM" id="SSF143800">
    <property type="entry name" value="L28p-like"/>
    <property type="match status" value="1"/>
</dbReference>
<accession>Q8EW04</accession>
<name>RL28_MALP2</name>
<keyword id="KW-1185">Reference proteome</keyword>
<keyword id="KW-0687">Ribonucleoprotein</keyword>
<keyword id="KW-0689">Ribosomal protein</keyword>
<sequence>MAKVDQITKKRAMTGNTRSHALNHSRRRWDLNLQKVKIYDENNNIVEVKVTARTLKGLKKNNKVVKVDYSKPAKVYGQNSPK</sequence>
<proteinExistence type="inferred from homology"/>
<comment type="similarity">
    <text evidence="1">Belongs to the bacterial ribosomal protein bL28 family.</text>
</comment>